<sequence>MEIDNKARIHWACRRGMRELDISIMPFFEYEYDSLSDNEKQAFIRLLECDDPDLFNWLMNHGEPQDSELYQMVKLIQSRNKARGPVAM</sequence>
<protein>
    <recommendedName>
        <fullName>FAD assembly factor SdhE</fullName>
    </recommendedName>
</protein>
<feature type="chain" id="PRO_0000214438" description="FAD assembly factor SdhE">
    <location>
        <begin position="1"/>
        <end position="88"/>
    </location>
</feature>
<keyword id="KW-0143">Chaperone</keyword>
<keyword id="KW-0963">Cytoplasm</keyword>
<reference key="1">
    <citation type="journal article" date="2004" name="Proc. Natl. Acad. Sci. U.S.A.">
        <title>Insights into the evolution of Yersinia pestis through whole-genome comparison with Yersinia pseudotuberculosis.</title>
        <authorList>
            <person name="Chain P.S.G."/>
            <person name="Carniel E."/>
            <person name="Larimer F.W."/>
            <person name="Lamerdin J."/>
            <person name="Stoutland P.O."/>
            <person name="Regala W.M."/>
            <person name="Georgescu A.M."/>
            <person name="Vergez L.M."/>
            <person name="Land M.L."/>
            <person name="Motin V.L."/>
            <person name="Brubaker R.R."/>
            <person name="Fowler J."/>
            <person name="Hinnebusch J."/>
            <person name="Marceau M."/>
            <person name="Medigue C."/>
            <person name="Simonet M."/>
            <person name="Chenal-Francisque V."/>
            <person name="Souza B."/>
            <person name="Dacheux D."/>
            <person name="Elliott J.M."/>
            <person name="Derbise A."/>
            <person name="Hauser L.J."/>
            <person name="Garcia E."/>
        </authorList>
    </citation>
    <scope>NUCLEOTIDE SEQUENCE [LARGE SCALE GENOMIC DNA]</scope>
    <source>
        <strain>IP32953</strain>
    </source>
</reference>
<dbReference type="EMBL" id="BX936398">
    <property type="protein sequence ID" value="CAH22411.1"/>
    <property type="molecule type" value="Genomic_DNA"/>
</dbReference>
<dbReference type="RefSeq" id="WP_002209939.1">
    <property type="nucleotide sequence ID" value="NZ_CP009712.1"/>
</dbReference>
<dbReference type="SMR" id="Q666S3"/>
<dbReference type="GeneID" id="57973742"/>
<dbReference type="KEGG" id="ypo:BZ17_3438"/>
<dbReference type="KEGG" id="yps:YPTB3173"/>
<dbReference type="PATRIC" id="fig|273123.14.peg.3609"/>
<dbReference type="Proteomes" id="UP000001011">
    <property type="component" value="Chromosome"/>
</dbReference>
<dbReference type="GO" id="GO:0005737">
    <property type="term" value="C:cytoplasm"/>
    <property type="evidence" value="ECO:0007669"/>
    <property type="project" value="UniProtKB-SubCell"/>
</dbReference>
<dbReference type="GO" id="GO:0006105">
    <property type="term" value="P:succinate metabolic process"/>
    <property type="evidence" value="ECO:0007669"/>
    <property type="project" value="TreeGrafter"/>
</dbReference>
<dbReference type="FunFam" id="1.10.150.250:FF:000001">
    <property type="entry name" value="FAD assembly factor SdhE"/>
    <property type="match status" value="1"/>
</dbReference>
<dbReference type="Gene3D" id="1.10.150.250">
    <property type="entry name" value="Flavinator of succinate dehydrogenase"/>
    <property type="match status" value="1"/>
</dbReference>
<dbReference type="InterPro" id="IPR005631">
    <property type="entry name" value="SDH"/>
</dbReference>
<dbReference type="InterPro" id="IPR036714">
    <property type="entry name" value="SDH_sf"/>
</dbReference>
<dbReference type="InterPro" id="IPR050531">
    <property type="entry name" value="SdhE_FAD_assembly_factor"/>
</dbReference>
<dbReference type="NCBIfam" id="NF008130">
    <property type="entry name" value="PRK10878.1"/>
    <property type="match status" value="1"/>
</dbReference>
<dbReference type="PANTHER" id="PTHR39585">
    <property type="entry name" value="FAD ASSEMBLY FACTOR SDHE"/>
    <property type="match status" value="1"/>
</dbReference>
<dbReference type="PANTHER" id="PTHR39585:SF1">
    <property type="entry name" value="FAD ASSEMBLY FACTOR SDHE"/>
    <property type="match status" value="1"/>
</dbReference>
<dbReference type="Pfam" id="PF03937">
    <property type="entry name" value="Sdh5"/>
    <property type="match status" value="1"/>
</dbReference>
<dbReference type="SUPFAM" id="SSF109910">
    <property type="entry name" value="YgfY-like"/>
    <property type="match status" value="1"/>
</dbReference>
<organism>
    <name type="scientific">Yersinia pseudotuberculosis serotype I (strain IP32953)</name>
    <dbReference type="NCBI Taxonomy" id="273123"/>
    <lineage>
        <taxon>Bacteria</taxon>
        <taxon>Pseudomonadati</taxon>
        <taxon>Pseudomonadota</taxon>
        <taxon>Gammaproteobacteria</taxon>
        <taxon>Enterobacterales</taxon>
        <taxon>Yersiniaceae</taxon>
        <taxon>Yersinia</taxon>
    </lineage>
</organism>
<accession>Q666S3</accession>
<evidence type="ECO:0000250" key="1">
    <source>
        <dbReference type="UniProtKB" id="G4V4G2"/>
    </source>
</evidence>
<evidence type="ECO:0000250" key="2">
    <source>
        <dbReference type="UniProtKB" id="P64559"/>
    </source>
</evidence>
<evidence type="ECO:0000305" key="3"/>
<comment type="function">
    <text evidence="1">An FAD assembly protein, which accelerates covalent attachment of the cofactor into other proteins. Plays an essential role in the assembly of succinate dehydrogenase (SDH, respiratory complex II), an enzyme complex that is a component of both the tricarboxylic acid cycle and the electron transport chain, and which couples the oxidation of succinate to fumarate with the reduction of ubiquinone (coenzyme Q) to ubiquinol. Required for flavinylation (covalent attachment of FAD) of the flavoprotein subunit SdhA of SDH and other flavinylated proteins as well.</text>
</comment>
<comment type="subunit">
    <text evidence="2">Monomer.</text>
</comment>
<comment type="subcellular location">
    <subcellularLocation>
        <location evidence="1">Cytoplasm</location>
    </subcellularLocation>
</comment>
<comment type="similarity">
    <text evidence="3">Belongs to the SdhE FAD assembly factor family.</text>
</comment>
<proteinExistence type="inferred from homology"/>
<gene>
    <name type="primary">sdhE</name>
    <name type="ordered locus">YPTB3173</name>
</gene>
<name>SDHE_YERPS</name>